<feature type="signal peptide" evidence="2">
    <location>
        <begin position="1"/>
        <end position="31"/>
    </location>
</feature>
<feature type="chain" id="PRO_0000401348" description="Probable inactive receptor-like protein kinase At3g56050">
    <location>
        <begin position="32"/>
        <end position="499"/>
    </location>
</feature>
<feature type="topological domain" description="Extracellular" evidence="2">
    <location>
        <begin position="32"/>
        <end position="146"/>
    </location>
</feature>
<feature type="transmembrane region" description="Helical" evidence="2">
    <location>
        <begin position="147"/>
        <end position="167"/>
    </location>
</feature>
<feature type="topological domain" description="Cytoplasmic" evidence="2">
    <location>
        <begin position="168"/>
        <end position="499"/>
    </location>
</feature>
<feature type="domain" description="Protein kinase" evidence="3">
    <location>
        <begin position="208"/>
        <end position="474"/>
    </location>
</feature>
<feature type="region of interest" description="Disordered" evidence="4">
    <location>
        <begin position="80"/>
        <end position="121"/>
    </location>
</feature>
<feature type="glycosylation site" description="N-linked (GlcNAc...) asparagine" evidence="2">
    <location>
        <position position="14"/>
    </location>
</feature>
<feature type="glycosylation site" description="N-linked (GlcNAc...) asparagine" evidence="2">
    <location>
        <position position="142"/>
    </location>
</feature>
<dbReference type="EMBL" id="AL163763">
    <property type="protein sequence ID" value="CAB87404.1"/>
    <property type="molecule type" value="Genomic_DNA"/>
</dbReference>
<dbReference type="EMBL" id="CP002686">
    <property type="protein sequence ID" value="AEE79470.1"/>
    <property type="molecule type" value="Genomic_DNA"/>
</dbReference>
<dbReference type="EMBL" id="CP002686">
    <property type="protein sequence ID" value="AEE79471.1"/>
    <property type="molecule type" value="Genomic_DNA"/>
</dbReference>
<dbReference type="EMBL" id="AY046021">
    <property type="protein sequence ID" value="AAK76695.1"/>
    <property type="molecule type" value="mRNA"/>
</dbReference>
<dbReference type="EMBL" id="AY091435">
    <property type="protein sequence ID" value="AAM14374.1"/>
    <property type="molecule type" value="mRNA"/>
</dbReference>
<dbReference type="EMBL" id="AY099821">
    <property type="protein sequence ID" value="AAM20672.1"/>
    <property type="molecule type" value="mRNA"/>
</dbReference>
<dbReference type="EMBL" id="BT000328">
    <property type="protein sequence ID" value="AAN15647.1"/>
    <property type="molecule type" value="mRNA"/>
</dbReference>
<dbReference type="EMBL" id="AF083761">
    <property type="protein sequence ID" value="AAN60319.1"/>
    <property type="molecule type" value="mRNA"/>
</dbReference>
<dbReference type="PIR" id="T47722">
    <property type="entry name" value="T47722"/>
</dbReference>
<dbReference type="RefSeq" id="NP_001078300.1">
    <property type="nucleotide sequence ID" value="NM_001084831.2"/>
</dbReference>
<dbReference type="RefSeq" id="NP_191164.1">
    <property type="nucleotide sequence ID" value="NM_115463.4"/>
</dbReference>
<dbReference type="SMR" id="Q9LYN6"/>
<dbReference type="FunCoup" id="Q9LYN6">
    <property type="interactions" value="138"/>
</dbReference>
<dbReference type="GlyGen" id="Q9LYN6">
    <property type="glycosylation" value="2 sites"/>
</dbReference>
<dbReference type="PaxDb" id="3702-AT3G56050.1"/>
<dbReference type="ProteomicsDB" id="242866"/>
<dbReference type="EnsemblPlants" id="AT3G56050.1">
    <property type="protein sequence ID" value="AT3G56050.1"/>
    <property type="gene ID" value="AT3G56050"/>
</dbReference>
<dbReference type="EnsemblPlants" id="AT3G56050.2">
    <property type="protein sequence ID" value="AT3G56050.2"/>
    <property type="gene ID" value="AT3G56050"/>
</dbReference>
<dbReference type="GeneID" id="824771"/>
<dbReference type="Gramene" id="AT3G56050.1">
    <property type="protein sequence ID" value="AT3G56050.1"/>
    <property type="gene ID" value="AT3G56050"/>
</dbReference>
<dbReference type="Gramene" id="AT3G56050.2">
    <property type="protein sequence ID" value="AT3G56050.2"/>
    <property type="gene ID" value="AT3G56050"/>
</dbReference>
<dbReference type="KEGG" id="ath:AT3G56050"/>
<dbReference type="Araport" id="AT3G56050"/>
<dbReference type="TAIR" id="AT3G56050"/>
<dbReference type="eggNOG" id="KOG1187">
    <property type="taxonomic scope" value="Eukaryota"/>
</dbReference>
<dbReference type="HOGENOM" id="CLU_000288_92_4_1"/>
<dbReference type="InParanoid" id="Q9LYN6"/>
<dbReference type="OMA" id="NIETQFR"/>
<dbReference type="PhylomeDB" id="Q9LYN6"/>
<dbReference type="PRO" id="PR:Q9LYN6"/>
<dbReference type="Proteomes" id="UP000006548">
    <property type="component" value="Chromosome 3"/>
</dbReference>
<dbReference type="ExpressionAtlas" id="Q9LYN6">
    <property type="expression patterns" value="baseline and differential"/>
</dbReference>
<dbReference type="GO" id="GO:0005886">
    <property type="term" value="C:plasma membrane"/>
    <property type="evidence" value="ECO:0007669"/>
    <property type="project" value="UniProtKB-SubCell"/>
</dbReference>
<dbReference type="GO" id="GO:0005524">
    <property type="term" value="F:ATP binding"/>
    <property type="evidence" value="ECO:0007669"/>
    <property type="project" value="InterPro"/>
</dbReference>
<dbReference type="GO" id="GO:0004672">
    <property type="term" value="F:protein kinase activity"/>
    <property type="evidence" value="ECO:0007669"/>
    <property type="project" value="InterPro"/>
</dbReference>
<dbReference type="FunFam" id="3.30.200.20:FF:000489">
    <property type="entry name" value="Inactive receptor-like serine/threonine-protein kinase"/>
    <property type="match status" value="1"/>
</dbReference>
<dbReference type="Gene3D" id="3.30.200.20">
    <property type="entry name" value="Phosphorylase Kinase, domain 1"/>
    <property type="match status" value="1"/>
</dbReference>
<dbReference type="Gene3D" id="1.10.510.10">
    <property type="entry name" value="Transferase(Phosphotransferase) domain 1"/>
    <property type="match status" value="1"/>
</dbReference>
<dbReference type="InterPro" id="IPR011009">
    <property type="entry name" value="Kinase-like_dom_sf"/>
</dbReference>
<dbReference type="InterPro" id="IPR000719">
    <property type="entry name" value="Prot_kinase_dom"/>
</dbReference>
<dbReference type="InterPro" id="IPR001245">
    <property type="entry name" value="Ser-Thr/Tyr_kinase_cat_dom"/>
</dbReference>
<dbReference type="PANTHER" id="PTHR46084:SF4">
    <property type="entry name" value="PROTEIN KINASE DOMAIN-CONTAINING PROTEIN"/>
    <property type="match status" value="1"/>
</dbReference>
<dbReference type="PANTHER" id="PTHR46084">
    <property type="entry name" value="PROTEIN MALE DISCOVERER 2"/>
    <property type="match status" value="1"/>
</dbReference>
<dbReference type="Pfam" id="PF07714">
    <property type="entry name" value="PK_Tyr_Ser-Thr"/>
    <property type="match status" value="1"/>
</dbReference>
<dbReference type="SUPFAM" id="SSF56112">
    <property type="entry name" value="Protein kinase-like (PK-like)"/>
    <property type="match status" value="1"/>
</dbReference>
<dbReference type="PROSITE" id="PS50011">
    <property type="entry name" value="PROTEIN_KINASE_DOM"/>
    <property type="match status" value="1"/>
</dbReference>
<proteinExistence type="evidence at transcript level"/>
<comment type="subcellular location">
    <subcellularLocation>
        <location evidence="1">Cell membrane</location>
        <topology evidence="1">Single-pass type I membrane protein</topology>
    </subcellularLocation>
</comment>
<comment type="domain">
    <text>The protein kinase domain is predicted to be catalytically inactive.</text>
</comment>
<keyword id="KW-1003">Cell membrane</keyword>
<keyword id="KW-0325">Glycoprotein</keyword>
<keyword id="KW-0472">Membrane</keyword>
<keyword id="KW-1185">Reference proteome</keyword>
<keyword id="KW-0732">Signal</keyword>
<keyword id="KW-0812">Transmembrane</keyword>
<keyword id="KW-1133">Transmembrane helix</keyword>
<accession>Q9LYN6</accession>
<protein>
    <recommendedName>
        <fullName>Probable inactive receptor-like protein kinase At3g56050</fullName>
    </recommendedName>
</protein>
<reference key="1">
    <citation type="journal article" date="2000" name="Nature">
        <title>Sequence and analysis of chromosome 3 of the plant Arabidopsis thaliana.</title>
        <authorList>
            <person name="Salanoubat M."/>
            <person name="Lemcke K."/>
            <person name="Rieger M."/>
            <person name="Ansorge W."/>
            <person name="Unseld M."/>
            <person name="Fartmann B."/>
            <person name="Valle G."/>
            <person name="Bloecker H."/>
            <person name="Perez-Alonso M."/>
            <person name="Obermaier B."/>
            <person name="Delseny M."/>
            <person name="Boutry M."/>
            <person name="Grivell L.A."/>
            <person name="Mache R."/>
            <person name="Puigdomenech P."/>
            <person name="De Simone V."/>
            <person name="Choisne N."/>
            <person name="Artiguenave F."/>
            <person name="Robert C."/>
            <person name="Brottier P."/>
            <person name="Wincker P."/>
            <person name="Cattolico L."/>
            <person name="Weissenbach J."/>
            <person name="Saurin W."/>
            <person name="Quetier F."/>
            <person name="Schaefer M."/>
            <person name="Mueller-Auer S."/>
            <person name="Gabel C."/>
            <person name="Fuchs M."/>
            <person name="Benes V."/>
            <person name="Wurmbach E."/>
            <person name="Drzonek H."/>
            <person name="Erfle H."/>
            <person name="Jordan N."/>
            <person name="Bangert S."/>
            <person name="Wiedelmann R."/>
            <person name="Kranz H."/>
            <person name="Voss H."/>
            <person name="Holland R."/>
            <person name="Brandt P."/>
            <person name="Nyakatura G."/>
            <person name="Vezzi A."/>
            <person name="D'Angelo M."/>
            <person name="Pallavicini A."/>
            <person name="Toppo S."/>
            <person name="Simionati B."/>
            <person name="Conrad A."/>
            <person name="Hornischer K."/>
            <person name="Kauer G."/>
            <person name="Loehnert T.-H."/>
            <person name="Nordsiek G."/>
            <person name="Reichelt J."/>
            <person name="Scharfe M."/>
            <person name="Schoen O."/>
            <person name="Bargues M."/>
            <person name="Terol J."/>
            <person name="Climent J."/>
            <person name="Navarro P."/>
            <person name="Collado C."/>
            <person name="Perez-Perez A."/>
            <person name="Ottenwaelder B."/>
            <person name="Duchemin D."/>
            <person name="Cooke R."/>
            <person name="Laudie M."/>
            <person name="Berger-Llauro C."/>
            <person name="Purnelle B."/>
            <person name="Masuy D."/>
            <person name="de Haan M."/>
            <person name="Maarse A.C."/>
            <person name="Alcaraz J.-P."/>
            <person name="Cottet A."/>
            <person name="Casacuberta E."/>
            <person name="Monfort A."/>
            <person name="Argiriou A."/>
            <person name="Flores M."/>
            <person name="Liguori R."/>
            <person name="Vitale D."/>
            <person name="Mannhaupt G."/>
            <person name="Haase D."/>
            <person name="Schoof H."/>
            <person name="Rudd S."/>
            <person name="Zaccaria P."/>
            <person name="Mewes H.-W."/>
            <person name="Mayer K.F.X."/>
            <person name="Kaul S."/>
            <person name="Town C.D."/>
            <person name="Koo H.L."/>
            <person name="Tallon L.J."/>
            <person name="Jenkins J."/>
            <person name="Rooney T."/>
            <person name="Rizzo M."/>
            <person name="Walts A."/>
            <person name="Utterback T."/>
            <person name="Fujii C.Y."/>
            <person name="Shea T.P."/>
            <person name="Creasy T.H."/>
            <person name="Haas B."/>
            <person name="Maiti R."/>
            <person name="Wu D."/>
            <person name="Peterson J."/>
            <person name="Van Aken S."/>
            <person name="Pai G."/>
            <person name="Militscher J."/>
            <person name="Sellers P."/>
            <person name="Gill J.E."/>
            <person name="Feldblyum T.V."/>
            <person name="Preuss D."/>
            <person name="Lin X."/>
            <person name="Nierman W.C."/>
            <person name="Salzberg S.L."/>
            <person name="White O."/>
            <person name="Venter J.C."/>
            <person name="Fraser C.M."/>
            <person name="Kaneko T."/>
            <person name="Nakamura Y."/>
            <person name="Sato S."/>
            <person name="Kato T."/>
            <person name="Asamizu E."/>
            <person name="Sasamoto S."/>
            <person name="Kimura T."/>
            <person name="Idesawa K."/>
            <person name="Kawashima K."/>
            <person name="Kishida Y."/>
            <person name="Kiyokawa C."/>
            <person name="Kohara M."/>
            <person name="Matsumoto M."/>
            <person name="Matsuno A."/>
            <person name="Muraki A."/>
            <person name="Nakayama S."/>
            <person name="Nakazaki N."/>
            <person name="Shinpo S."/>
            <person name="Takeuchi C."/>
            <person name="Wada T."/>
            <person name="Watanabe A."/>
            <person name="Yamada M."/>
            <person name="Yasuda M."/>
            <person name="Tabata S."/>
        </authorList>
    </citation>
    <scope>NUCLEOTIDE SEQUENCE [LARGE SCALE GENOMIC DNA]</scope>
    <source>
        <strain>cv. Columbia</strain>
    </source>
</reference>
<reference key="2">
    <citation type="journal article" date="2017" name="Plant J.">
        <title>Araport11: a complete reannotation of the Arabidopsis thaliana reference genome.</title>
        <authorList>
            <person name="Cheng C.Y."/>
            <person name="Krishnakumar V."/>
            <person name="Chan A.P."/>
            <person name="Thibaud-Nissen F."/>
            <person name="Schobel S."/>
            <person name="Town C.D."/>
        </authorList>
    </citation>
    <scope>GENOME REANNOTATION</scope>
    <source>
        <strain>cv. Columbia</strain>
    </source>
</reference>
<reference key="3">
    <citation type="journal article" date="2003" name="Science">
        <title>Empirical analysis of transcriptional activity in the Arabidopsis genome.</title>
        <authorList>
            <person name="Yamada K."/>
            <person name="Lim J."/>
            <person name="Dale J.M."/>
            <person name="Chen H."/>
            <person name="Shinn P."/>
            <person name="Palm C.J."/>
            <person name="Southwick A.M."/>
            <person name="Wu H.C."/>
            <person name="Kim C.J."/>
            <person name="Nguyen M."/>
            <person name="Pham P.K."/>
            <person name="Cheuk R.F."/>
            <person name="Karlin-Newmann G."/>
            <person name="Liu S.X."/>
            <person name="Lam B."/>
            <person name="Sakano H."/>
            <person name="Wu T."/>
            <person name="Yu G."/>
            <person name="Miranda M."/>
            <person name="Quach H.L."/>
            <person name="Tripp M."/>
            <person name="Chang C.H."/>
            <person name="Lee J.M."/>
            <person name="Toriumi M.J."/>
            <person name="Chan M.M."/>
            <person name="Tang C.C."/>
            <person name="Onodera C.S."/>
            <person name="Deng J.M."/>
            <person name="Akiyama K."/>
            <person name="Ansari Y."/>
            <person name="Arakawa T."/>
            <person name="Banh J."/>
            <person name="Banno F."/>
            <person name="Bowser L."/>
            <person name="Brooks S.Y."/>
            <person name="Carninci P."/>
            <person name="Chao Q."/>
            <person name="Choy N."/>
            <person name="Enju A."/>
            <person name="Goldsmith A.D."/>
            <person name="Gurjal M."/>
            <person name="Hansen N.F."/>
            <person name="Hayashizaki Y."/>
            <person name="Johnson-Hopson C."/>
            <person name="Hsuan V.W."/>
            <person name="Iida K."/>
            <person name="Karnes M."/>
            <person name="Khan S."/>
            <person name="Koesema E."/>
            <person name="Ishida J."/>
            <person name="Jiang P.X."/>
            <person name="Jones T."/>
            <person name="Kawai J."/>
            <person name="Kamiya A."/>
            <person name="Meyers C."/>
            <person name="Nakajima M."/>
            <person name="Narusaka M."/>
            <person name="Seki M."/>
            <person name="Sakurai T."/>
            <person name="Satou M."/>
            <person name="Tamse R."/>
            <person name="Vaysberg M."/>
            <person name="Wallender E.K."/>
            <person name="Wong C."/>
            <person name="Yamamura Y."/>
            <person name="Yuan S."/>
            <person name="Shinozaki K."/>
            <person name="Davis R.W."/>
            <person name="Theologis A."/>
            <person name="Ecker J.R."/>
        </authorList>
    </citation>
    <scope>NUCLEOTIDE SEQUENCE [LARGE SCALE MRNA]</scope>
    <source>
        <strain>cv. Columbia</strain>
    </source>
</reference>
<reference key="4">
    <citation type="submission" date="1998-08" db="EMBL/GenBank/DDBJ databases">
        <title>Signal peptide selection derived cDNAs from Arabidopsis thaliana leaves and guard cells.</title>
        <authorList>
            <person name="Stracke R."/>
            <person name="Palme K."/>
        </authorList>
    </citation>
    <scope>NUCLEOTIDE SEQUENCE [LARGE SCALE MRNA]</scope>
    <source>
        <tissue>Leaf</tissue>
    </source>
</reference>
<evidence type="ECO:0000250" key="1"/>
<evidence type="ECO:0000255" key="2"/>
<evidence type="ECO:0000255" key="3">
    <source>
        <dbReference type="PROSITE-ProRule" id="PRU00159"/>
    </source>
</evidence>
<evidence type="ECO:0000256" key="4">
    <source>
        <dbReference type="SAM" id="MobiDB-lite"/>
    </source>
</evidence>
<organism>
    <name type="scientific">Arabidopsis thaliana</name>
    <name type="common">Mouse-ear cress</name>
    <dbReference type="NCBI Taxonomy" id="3702"/>
    <lineage>
        <taxon>Eukaryota</taxon>
        <taxon>Viridiplantae</taxon>
        <taxon>Streptophyta</taxon>
        <taxon>Embryophyta</taxon>
        <taxon>Tracheophyta</taxon>
        <taxon>Spermatophyta</taxon>
        <taxon>Magnoliopsida</taxon>
        <taxon>eudicotyledons</taxon>
        <taxon>Gunneridae</taxon>
        <taxon>Pentapetalae</taxon>
        <taxon>rosids</taxon>
        <taxon>malvids</taxon>
        <taxon>Brassicales</taxon>
        <taxon>Brassicaceae</taxon>
        <taxon>Camelineae</taxon>
        <taxon>Arabidopsis</taxon>
    </lineage>
</organism>
<gene>
    <name type="ordered locus">At3g56050</name>
    <name type="ORF">F18O21.10</name>
</gene>
<name>Y3565_ARATH</name>
<sequence length="499" mass="55231">MSNNWKSVRLRLQNRTLVFLLVILSFGSCYSLKSQGDGFLESVTKDLWSDIDAEDLRAVGFHRKLLGRFRNPYTHLNAFRDRPVARATPPSSSVSTRPDAKRSSTLPPPQKSPPAQHVSAPPPFVHHVTLPSLTSSSKTSSNSTIPIVAGCIAGAVFILLLATGVFFFKSKAGKSVNPWRTGLSGQLQKVFITGVPKLKRSEIEAACEDFSNVIGSCPIGTLFKGTLSSGVEIAVASVATASAKEWTNNIEMQFRKKIEMLSKINHKNFVNLLGYCEEEEPFTRILVFEYASNGTVFEHLHYKESEHLDWVMRLRIAMGIAYCLDHMHGLKPPIVHSNLLSSSVQLTEDYAVKIADFNFGYLKGPSETESSTNALIDTNISETTQEDNVHSFGLLLFELMTGKLPESVQKGDSIDTGLAVFLRGKTLREMVDPTIESFDEKIENIGEVIKSCIRADAKQRPIMKEVTGRLREITGLSPDDTIPKLSPLWWAELEVLSTA</sequence>